<comment type="function">
    <text evidence="5 7">Snake venom zinc metalloproteinase-disintegrin-like that blocks the interaction between platelets and collagen fibers through its binding to collagen fibers, resulting in the blockade of collagen-mediated platelet functions such as adhesion, release reaction, thromboxane formation, and aggregation. Binds selectively to collagen type I with high affinity. Also exerts proteolytic activity to matrix.</text>
</comment>
<comment type="cofactor">
    <cofactor evidence="1">
        <name>Zn(2+)</name>
        <dbReference type="ChEBI" id="CHEBI:29105"/>
    </cofactor>
    <text evidence="1">Binds 1 zinc ion per subunit.</text>
</comment>
<comment type="subunit">
    <text evidence="6">Monomer.</text>
</comment>
<comment type="subcellular location">
    <subcellularLocation>
        <location>Secreted</location>
    </subcellularLocation>
</comment>
<comment type="tissue specificity">
    <text>Expressed by the venom gland.</text>
</comment>
<comment type="similarity">
    <text evidence="8">Belongs to the venom metalloproteinase (M12B) family. P-III subfamily. P-IIIa sub-subfamily.</text>
</comment>
<protein>
    <recommendedName>
        <fullName>Zinc metalloproteinase-disintegrin-like crovidisin</fullName>
        <ecNumber>3.4.24.-</ecNumber>
    </recommendedName>
    <alternativeName>
        <fullName>Snake venom metalloproteinase</fullName>
        <shortName>SVMP</shortName>
    </alternativeName>
</protein>
<sequence>AMVTKNNGDLDKSGTECRLYCKDNSPGQNNSCKMFYSNEDEHKGMVLPGTK</sequence>
<proteinExistence type="evidence at protein level"/>
<evidence type="ECO:0000250" key="1"/>
<evidence type="ECO:0000255" key="2"/>
<evidence type="ECO:0000255" key="3">
    <source>
        <dbReference type="PROSITE-ProRule" id="PRU00068"/>
    </source>
</evidence>
<evidence type="ECO:0000255" key="4">
    <source>
        <dbReference type="PROSITE-ProRule" id="PRU00276"/>
    </source>
</evidence>
<evidence type="ECO:0000269" key="5">
    <source>
    </source>
</evidence>
<evidence type="ECO:0000269" key="6">
    <source>
    </source>
</evidence>
<evidence type="ECO:0000269" key="7">
    <source>
    </source>
</evidence>
<evidence type="ECO:0000305" key="8"/>
<accession>P0C7N3</accession>
<organism>
    <name type="scientific">Crotalus viridis viridis</name>
    <name type="common">Prairie rattlesnake</name>
    <dbReference type="NCBI Taxonomy" id="8742"/>
    <lineage>
        <taxon>Eukaryota</taxon>
        <taxon>Metazoa</taxon>
        <taxon>Chordata</taxon>
        <taxon>Craniata</taxon>
        <taxon>Vertebrata</taxon>
        <taxon>Euteleostomi</taxon>
        <taxon>Lepidosauria</taxon>
        <taxon>Squamata</taxon>
        <taxon>Bifurcata</taxon>
        <taxon>Unidentata</taxon>
        <taxon>Episquamata</taxon>
        <taxon>Toxicofera</taxon>
        <taxon>Serpentes</taxon>
        <taxon>Colubroidea</taxon>
        <taxon>Viperidae</taxon>
        <taxon>Crotalinae</taxon>
        <taxon>Crotalus</taxon>
    </lineage>
</organism>
<keyword id="KW-0053">Apoptosis</keyword>
<keyword id="KW-0903">Direct protein sequencing</keyword>
<keyword id="KW-0325">Glycoprotein</keyword>
<keyword id="KW-1199">Hemostasis impairing toxin</keyword>
<keyword id="KW-0378">Hydrolase</keyword>
<keyword id="KW-0479">Metal-binding</keyword>
<keyword id="KW-0482">Metalloprotease</keyword>
<keyword id="KW-1201">Platelet aggregation inhibiting toxin</keyword>
<keyword id="KW-0645">Protease</keyword>
<keyword id="KW-0964">Secreted</keyword>
<keyword id="KW-0800">Toxin</keyword>
<keyword id="KW-0862">Zinc</keyword>
<feature type="chain" id="PRO_0000340301" description="Zinc metalloproteinase-disintegrin-like crovidisin">
    <location>
        <begin position="1" status="less than"/>
        <end position="51" status="greater than"/>
    </location>
</feature>
<feature type="domain" description="Peptidase M12B" evidence="4">
    <location>
        <begin position="1" status="less than"/>
        <end position="12" status="greater than"/>
    </location>
</feature>
<feature type="domain" description="Disintegrin" evidence="3">
    <location>
        <begin position="13" status="less than"/>
        <end position="18" status="greater than"/>
    </location>
</feature>
<feature type="glycosylation site" description="N-linked (GlcNAc...) asparagine" evidence="2">
    <location>
        <position position="29"/>
    </location>
</feature>
<feature type="non-consecutive residues" evidence="8">
    <location>
        <begin position="12"/>
        <end position="13"/>
    </location>
</feature>
<feature type="non-consecutive residues" evidence="8">
    <location>
        <begin position="18"/>
        <end position="19"/>
    </location>
</feature>
<feature type="non-terminal residue">
    <location>
        <position position="1"/>
    </location>
</feature>
<feature type="non-terminal residue">
    <location>
        <position position="51"/>
    </location>
</feature>
<dbReference type="EC" id="3.4.24.-"/>
<dbReference type="SMR" id="P0C7N3"/>
<dbReference type="GO" id="GO:0005576">
    <property type="term" value="C:extracellular region"/>
    <property type="evidence" value="ECO:0007669"/>
    <property type="project" value="UniProtKB-SubCell"/>
</dbReference>
<dbReference type="GO" id="GO:0046872">
    <property type="term" value="F:metal ion binding"/>
    <property type="evidence" value="ECO:0007669"/>
    <property type="project" value="UniProtKB-KW"/>
</dbReference>
<dbReference type="GO" id="GO:0008237">
    <property type="term" value="F:metallopeptidase activity"/>
    <property type="evidence" value="ECO:0007669"/>
    <property type="project" value="UniProtKB-KW"/>
</dbReference>
<dbReference type="GO" id="GO:0090729">
    <property type="term" value="F:toxin activity"/>
    <property type="evidence" value="ECO:0007669"/>
    <property type="project" value="UniProtKB-KW"/>
</dbReference>
<dbReference type="GO" id="GO:0006915">
    <property type="term" value="P:apoptotic process"/>
    <property type="evidence" value="ECO:0007669"/>
    <property type="project" value="UniProtKB-KW"/>
</dbReference>
<dbReference type="GO" id="GO:0006508">
    <property type="term" value="P:proteolysis"/>
    <property type="evidence" value="ECO:0007669"/>
    <property type="project" value="UniProtKB-KW"/>
</dbReference>
<reference key="1">
    <citation type="journal article" date="1997" name="Arch. Biochem. Biophys.">
        <title>Crovidisin, a collagen-binding protein isolated from snake venom of Crotalus viridis, prevents platelet-collagen interaction.</title>
        <authorList>
            <person name="Liu C.-Z."/>
            <person name="Huang T.-F."/>
        </authorList>
    </citation>
    <scope>PROTEIN SEQUENCE</scope>
    <scope>SUBUNIT</scope>
    <source>
        <tissue>Venom</tissue>
    </source>
</reference>
<reference key="2">
    <citation type="journal article" date="1997" name="Curr. Eye Res.">
        <title>Inhibition of RPE cell-mediated matrix adhesion and collagen gel contraction by crovidisin, a collagen-binding snake venom protein.</title>
        <authorList>
            <person name="Yang C.-H."/>
            <person name="Liu C.-Z."/>
            <person name="Huang T.-F."/>
            <person name="Yang C.-M."/>
            <person name="Lui K.-R."/>
            <person name="Chen M.-S."/>
            <person name="Hung P.-T."/>
        </authorList>
    </citation>
    <scope>FUNCTION AS THERAPEUTIC AGENT FOR OCULAR DISORDERS</scope>
</reference>
<reference key="3">
    <citation type="journal article" date="2004" name="Toxicon">
        <title>Differential susceptibility of osteosarcoma cells and primary osteoblasts to cell detachment caused by snake venom metalloproteinase protein.</title>
        <authorList>
            <person name="Tang C.-H."/>
            <person name="Yang R.-S."/>
            <person name="Liu C.-Z."/>
            <person name="Huang T.-F."/>
            <person name="Fu W.-M."/>
        </authorList>
    </citation>
    <scope>FUNCTION</scope>
    <source>
        <tissue>Venom</tissue>
    </source>
</reference>
<name>VM3CR_CROVV</name>